<protein>
    <recommendedName>
        <fullName>MADS-box transcription factor 14</fullName>
    </recommendedName>
    <alternativeName>
        <fullName>FDRMADS6</fullName>
    </alternativeName>
    <alternativeName>
        <fullName>OsMADS14</fullName>
    </alternativeName>
    <alternativeName>
        <fullName>Protein AGAMOUS-like 10</fullName>
    </alternativeName>
    <alternativeName>
        <fullName>Protein APETALA1-like B</fullName>
    </alternativeName>
    <alternativeName>
        <fullName>RMADS211</fullName>
    </alternativeName>
</protein>
<accession>Q10CQ1</accession>
<accession>B9FBV1</accession>
<accession>Q10CQ2</accession>
<accession>Q7Y023</accession>
<accession>Q8LLN3</accession>
<accession>Q9M7C6</accession>
<accession>Q9MAY7</accession>
<accession>Q9SEX0</accession>
<feature type="chain" id="PRO_0000229899" description="MADS-box transcription factor 14">
    <location>
        <begin position="1"/>
        <end position="246"/>
    </location>
</feature>
<feature type="domain" description="MADS-box" evidence="1">
    <location>
        <begin position="1"/>
        <end position="61"/>
    </location>
</feature>
<feature type="domain" description="K-box" evidence="2">
    <location>
        <begin position="88"/>
        <end position="178"/>
    </location>
</feature>
<feature type="region of interest" description="Disordered" evidence="3">
    <location>
        <begin position="180"/>
        <end position="199"/>
    </location>
</feature>
<feature type="splice variant" id="VSP_017783" description="In isoform 2." evidence="6">
    <original>E</original>
    <variation>ENPCSFLQ</variation>
    <location>
        <position position="171"/>
    </location>
</feature>
<feature type="sequence conflict" description="In Ref. 1; AAF19047." evidence="7" ref="1">
    <original>G</original>
    <variation>K</variation>
    <location>
        <position position="27"/>
    </location>
</feature>
<feature type="sequence conflict" description="In Ref. 2; BAA94342." evidence="7" ref="2">
    <original>V</original>
    <variation>L</variation>
    <location>
        <position position="183"/>
    </location>
</feature>
<feature type="sequence conflict" description="In Ref. 2; BAA94342." evidence="7" ref="2">
    <original>S</original>
    <variation>I</variation>
    <location>
        <position position="193"/>
    </location>
</feature>
<feature type="sequence conflict" description="In Ref. 2; BAA94342." evidence="7" ref="2">
    <original>A</original>
    <variation>P</variation>
    <location>
        <position position="225"/>
    </location>
</feature>
<feature type="sequence conflict" description="In Ref. 1; AAF19047." evidence="7" ref="1">
    <original>V</original>
    <variation>E</variation>
    <location>
        <position position="232"/>
    </location>
</feature>
<organism>
    <name type="scientific">Oryza sativa subsp. japonica</name>
    <name type="common">Rice</name>
    <dbReference type="NCBI Taxonomy" id="39947"/>
    <lineage>
        <taxon>Eukaryota</taxon>
        <taxon>Viridiplantae</taxon>
        <taxon>Streptophyta</taxon>
        <taxon>Embryophyta</taxon>
        <taxon>Tracheophyta</taxon>
        <taxon>Spermatophyta</taxon>
        <taxon>Magnoliopsida</taxon>
        <taxon>Liliopsida</taxon>
        <taxon>Poales</taxon>
        <taxon>Poaceae</taxon>
        <taxon>BOP clade</taxon>
        <taxon>Oryzoideae</taxon>
        <taxon>Oryzeae</taxon>
        <taxon>Oryzinae</taxon>
        <taxon>Oryza</taxon>
        <taxon>Oryza sativa</taxon>
    </lineage>
</organism>
<dbReference type="EMBL" id="AF058697">
    <property type="protein sequence ID" value="AAF19047.1"/>
    <property type="molecule type" value="mRNA"/>
</dbReference>
<dbReference type="EMBL" id="AB041020">
    <property type="protein sequence ID" value="BAA94342.1"/>
    <property type="molecule type" value="mRNA"/>
</dbReference>
<dbReference type="EMBL" id="AY332478">
    <property type="protein sequence ID" value="AAQ01164.1"/>
    <property type="molecule type" value="mRNA"/>
</dbReference>
<dbReference type="EMBL" id="AY551916">
    <property type="protein sequence ID" value="AAS59822.1"/>
    <property type="molecule type" value="mRNA"/>
</dbReference>
<dbReference type="EMBL" id="AC092556">
    <property type="protein sequence ID" value="AAR87240.1"/>
    <property type="molecule type" value="Genomic_DNA"/>
</dbReference>
<dbReference type="EMBL" id="AC135225">
    <property type="protein sequence ID" value="AAP68361.1"/>
    <property type="molecule type" value="Genomic_DNA"/>
</dbReference>
<dbReference type="EMBL" id="AF377947">
    <property type="protein sequence ID" value="AAM34398.1"/>
    <property type="molecule type" value="Genomic_DNA"/>
</dbReference>
<dbReference type="EMBL" id="DP000009">
    <property type="protein sequence ID" value="ABF98924.1"/>
    <property type="molecule type" value="Genomic_DNA"/>
</dbReference>
<dbReference type="EMBL" id="DP000009">
    <property type="protein sequence ID" value="ABF98925.1"/>
    <property type="molecule type" value="Genomic_DNA"/>
</dbReference>
<dbReference type="EMBL" id="AP008209">
    <property type="protein sequence ID" value="BAF13214.1"/>
    <property type="molecule type" value="Genomic_DNA"/>
</dbReference>
<dbReference type="EMBL" id="AP014959">
    <property type="protein sequence ID" value="BAS86428.1"/>
    <property type="molecule type" value="Genomic_DNA"/>
</dbReference>
<dbReference type="EMBL" id="CM000140">
    <property type="protein sequence ID" value="EEE59943.1"/>
    <property type="molecule type" value="Genomic_DNA"/>
</dbReference>
<dbReference type="RefSeq" id="XP_015631033.1">
    <property type="nucleotide sequence ID" value="XM_015775547.1"/>
</dbReference>
<dbReference type="RefSeq" id="XP_015631034.1">
    <property type="nucleotide sequence ID" value="XM_015775548.1"/>
</dbReference>
<dbReference type="SMR" id="Q10CQ1"/>
<dbReference type="BioGRID" id="803177">
    <property type="interactions" value="1"/>
</dbReference>
<dbReference type="FunCoup" id="Q10CQ1">
    <property type="interactions" value="45"/>
</dbReference>
<dbReference type="IntAct" id="Q10CQ1">
    <property type="interactions" value="12"/>
</dbReference>
<dbReference type="STRING" id="39947.Q10CQ1"/>
<dbReference type="PaxDb" id="39947-Q10CQ1"/>
<dbReference type="EnsemblPlants" id="Os03t0752800-02">
    <molecule id="Q10CQ1-1"/>
    <property type="protein sequence ID" value="Os03t0752800-02"/>
    <property type="gene ID" value="Os03g0752800"/>
</dbReference>
<dbReference type="Gramene" id="Os03t0752800-02">
    <molecule id="Q10CQ1-1"/>
    <property type="protein sequence ID" value="Os03t0752800-02"/>
    <property type="gene ID" value="Os03g0752800"/>
</dbReference>
<dbReference type="KEGG" id="dosa:Os03g0752800"/>
<dbReference type="eggNOG" id="KOG0014">
    <property type="taxonomic scope" value="Eukaryota"/>
</dbReference>
<dbReference type="InParanoid" id="Q10CQ1"/>
<dbReference type="OrthoDB" id="1933443at2759"/>
<dbReference type="PlantReactome" id="R-OSA-8934036">
    <property type="pathway name" value="Long day regulated expression of florigens"/>
</dbReference>
<dbReference type="PlantReactome" id="R-OSA-8934257">
    <property type="pathway name" value="Transition from vegetative to reproductive shoot apical meristem"/>
</dbReference>
<dbReference type="PlantReactome" id="R-OSA-9609102">
    <property type="pathway name" value="Flower development"/>
</dbReference>
<dbReference type="Proteomes" id="UP000000763">
    <property type="component" value="Chromosome 3"/>
</dbReference>
<dbReference type="Proteomes" id="UP000007752">
    <property type="component" value="Chromosome 3"/>
</dbReference>
<dbReference type="Proteomes" id="UP000059680">
    <property type="component" value="Chromosome 3"/>
</dbReference>
<dbReference type="ExpressionAtlas" id="Q10CQ1">
    <property type="expression patterns" value="baseline and differential"/>
</dbReference>
<dbReference type="GO" id="GO:0005634">
    <property type="term" value="C:nucleus"/>
    <property type="evidence" value="ECO:0007669"/>
    <property type="project" value="UniProtKB-SubCell"/>
</dbReference>
<dbReference type="GO" id="GO:0000981">
    <property type="term" value="F:DNA-binding transcription factor activity, RNA polymerase II-specific"/>
    <property type="evidence" value="ECO:0000318"/>
    <property type="project" value="GO_Central"/>
</dbReference>
<dbReference type="GO" id="GO:0046983">
    <property type="term" value="F:protein dimerization activity"/>
    <property type="evidence" value="ECO:0007669"/>
    <property type="project" value="InterPro"/>
</dbReference>
<dbReference type="GO" id="GO:0000978">
    <property type="term" value="F:RNA polymerase II cis-regulatory region sequence-specific DNA binding"/>
    <property type="evidence" value="ECO:0000318"/>
    <property type="project" value="GO_Central"/>
</dbReference>
<dbReference type="GO" id="GO:0030154">
    <property type="term" value="P:cell differentiation"/>
    <property type="evidence" value="ECO:0007669"/>
    <property type="project" value="UniProtKB-KW"/>
</dbReference>
<dbReference type="GO" id="GO:0009908">
    <property type="term" value="P:flower development"/>
    <property type="evidence" value="ECO:0007669"/>
    <property type="project" value="UniProtKB-KW"/>
</dbReference>
<dbReference type="GO" id="GO:0045944">
    <property type="term" value="P:positive regulation of transcription by RNA polymerase II"/>
    <property type="evidence" value="ECO:0007669"/>
    <property type="project" value="InterPro"/>
</dbReference>
<dbReference type="GO" id="GO:0006357">
    <property type="term" value="P:regulation of transcription by RNA polymerase II"/>
    <property type="evidence" value="ECO:0000318"/>
    <property type="project" value="GO_Central"/>
</dbReference>
<dbReference type="CDD" id="cd00265">
    <property type="entry name" value="MADS_MEF2_like"/>
    <property type="match status" value="1"/>
</dbReference>
<dbReference type="FunFam" id="3.40.1810.10:FF:000003">
    <property type="entry name" value="MADS-box transcription factor MADS-MC"/>
    <property type="match status" value="1"/>
</dbReference>
<dbReference type="Gene3D" id="3.40.1810.10">
    <property type="entry name" value="Transcription factor, MADS-box"/>
    <property type="match status" value="1"/>
</dbReference>
<dbReference type="InterPro" id="IPR050142">
    <property type="entry name" value="MADS-box/MEF2_TF"/>
</dbReference>
<dbReference type="InterPro" id="IPR033896">
    <property type="entry name" value="MEF2-like_N"/>
</dbReference>
<dbReference type="InterPro" id="IPR002487">
    <property type="entry name" value="TF_Kbox"/>
</dbReference>
<dbReference type="InterPro" id="IPR002100">
    <property type="entry name" value="TF_MADSbox"/>
</dbReference>
<dbReference type="InterPro" id="IPR036879">
    <property type="entry name" value="TF_MADSbox_sf"/>
</dbReference>
<dbReference type="PANTHER" id="PTHR48019">
    <property type="entry name" value="SERUM RESPONSE FACTOR HOMOLOG"/>
    <property type="match status" value="1"/>
</dbReference>
<dbReference type="Pfam" id="PF01486">
    <property type="entry name" value="K-box"/>
    <property type="match status" value="1"/>
</dbReference>
<dbReference type="Pfam" id="PF00319">
    <property type="entry name" value="SRF-TF"/>
    <property type="match status" value="1"/>
</dbReference>
<dbReference type="PRINTS" id="PR00404">
    <property type="entry name" value="MADSDOMAIN"/>
</dbReference>
<dbReference type="SMART" id="SM00432">
    <property type="entry name" value="MADS"/>
    <property type="match status" value="1"/>
</dbReference>
<dbReference type="SUPFAM" id="SSF55455">
    <property type="entry name" value="SRF-like"/>
    <property type="match status" value="1"/>
</dbReference>
<dbReference type="PROSITE" id="PS51297">
    <property type="entry name" value="K_BOX"/>
    <property type="match status" value="1"/>
</dbReference>
<dbReference type="PROSITE" id="PS00350">
    <property type="entry name" value="MADS_BOX_1"/>
    <property type="match status" value="1"/>
</dbReference>
<dbReference type="PROSITE" id="PS50066">
    <property type="entry name" value="MADS_BOX_2"/>
    <property type="match status" value="1"/>
</dbReference>
<proteinExistence type="evidence at protein level"/>
<name>MAD14_ORYSJ</name>
<reference key="1">
    <citation type="journal article" date="1999" name="Plant Physiol.">
        <title>Determination of the motif responsible for interaction between the rice APETALA1/AGAMOUS-LIKE9 family proteins using a yeast two-hybrid system.</title>
        <authorList>
            <person name="Moon Y.-H."/>
            <person name="Kang H.-G."/>
            <person name="Jung J.-Y."/>
            <person name="Jeon J.-S."/>
            <person name="Sung S.-K."/>
            <person name="An G."/>
        </authorList>
    </citation>
    <scope>NUCLEOTIDE SEQUENCE [MRNA] (ISOFORM 1)</scope>
    <scope>TISSUE SPECIFICITY</scope>
    <scope>INTERACTION WITH MADS6</scope>
    <source>
        <tissue>Flower</tissue>
    </source>
</reference>
<reference key="2">
    <citation type="journal article" date="2000" name="Plant Cell Physiol.">
        <title>Spatially and temporally regulated expression of rice MADS box genes with similarity to Arabidopsis class A, B and C genes.</title>
        <authorList>
            <person name="Kyozuka J."/>
            <person name="Kobayashi T."/>
            <person name="Morita M."/>
            <person name="Shimamoto K."/>
        </authorList>
    </citation>
    <scope>NUCLEOTIDE SEQUENCE [MRNA] (ISOFORM 1)</scope>
    <source>
        <tissue>Panicle</tissue>
    </source>
</reference>
<reference key="3">
    <citation type="submission" date="2004-02" db="EMBL/GenBank/DDBJ databases">
        <title>Isolation and characterization of rice MADS box gene homologs.</title>
        <authorList>
            <person name="Yao Q."/>
            <person name="Peng R."/>
            <person name="Xiong A."/>
        </authorList>
    </citation>
    <scope>NUCLEOTIDE SEQUENCE [MRNA] (ISOFORMS 1 AND 2)</scope>
</reference>
<reference key="4">
    <citation type="journal article" date="2005" name="Genome Res.">
        <title>Sequence, annotation, and analysis of synteny between rice chromosome 3 and diverged grass species.</title>
        <authorList>
            <consortium name="The rice chromosome 3 sequencing consortium"/>
            <person name="Buell C.R."/>
            <person name="Yuan Q."/>
            <person name="Ouyang S."/>
            <person name="Liu J."/>
            <person name="Zhu W."/>
            <person name="Wang A."/>
            <person name="Maiti R."/>
            <person name="Haas B."/>
            <person name="Wortman J."/>
            <person name="Pertea M."/>
            <person name="Jones K.M."/>
            <person name="Kim M."/>
            <person name="Overton L."/>
            <person name="Tsitrin T."/>
            <person name="Fadrosh D."/>
            <person name="Bera J."/>
            <person name="Weaver B."/>
            <person name="Jin S."/>
            <person name="Johri S."/>
            <person name="Reardon M."/>
            <person name="Webb K."/>
            <person name="Hill J."/>
            <person name="Moffat K."/>
            <person name="Tallon L."/>
            <person name="Van Aken S."/>
            <person name="Lewis M."/>
            <person name="Utterback T."/>
            <person name="Feldblyum T."/>
            <person name="Zismann V."/>
            <person name="Iobst S."/>
            <person name="Hsiao J."/>
            <person name="de Vazeille A.R."/>
            <person name="Salzberg S.L."/>
            <person name="White O."/>
            <person name="Fraser C.M."/>
            <person name="Yu Y."/>
            <person name="Kim H."/>
            <person name="Rambo T."/>
            <person name="Currie J."/>
            <person name="Collura K."/>
            <person name="Kernodle-Thompson S."/>
            <person name="Wei F."/>
            <person name="Kudrna K."/>
            <person name="Ammiraju J.S.S."/>
            <person name="Luo M."/>
            <person name="Goicoechea J.L."/>
            <person name="Wing R.A."/>
            <person name="Henry D."/>
            <person name="Oates R."/>
            <person name="Palmer M."/>
            <person name="Pries G."/>
            <person name="Saski C."/>
            <person name="Simmons J."/>
            <person name="Soderlund C."/>
            <person name="Nelson W."/>
            <person name="de la Bastide M."/>
            <person name="Spiegel L."/>
            <person name="Nascimento L."/>
            <person name="Huang E."/>
            <person name="Preston R."/>
            <person name="Zutavern T."/>
            <person name="Palmer L."/>
            <person name="O'Shaughnessy A."/>
            <person name="Dike S."/>
            <person name="McCombie W.R."/>
            <person name="Minx P."/>
            <person name="Cordum H."/>
            <person name="Wilson R."/>
            <person name="Jin W."/>
            <person name="Lee H.R."/>
            <person name="Jiang J."/>
            <person name="Jackson S."/>
        </authorList>
    </citation>
    <scope>NUCLEOTIDE SEQUENCE [LARGE SCALE GENOMIC DNA]</scope>
    <source>
        <strain>cv. Nipponbare</strain>
    </source>
</reference>
<reference key="5">
    <citation type="journal article" date="2005" name="Nature">
        <title>The map-based sequence of the rice genome.</title>
        <authorList>
            <consortium name="International rice genome sequencing project (IRGSP)"/>
        </authorList>
    </citation>
    <scope>NUCLEOTIDE SEQUENCE [LARGE SCALE GENOMIC DNA]</scope>
    <source>
        <strain>cv. Nipponbare</strain>
    </source>
</reference>
<reference key="6">
    <citation type="journal article" date="2008" name="Nucleic Acids Res.">
        <title>The rice annotation project database (RAP-DB): 2008 update.</title>
        <authorList>
            <consortium name="The rice annotation project (RAP)"/>
        </authorList>
    </citation>
    <scope>GENOME REANNOTATION</scope>
    <source>
        <strain>cv. Nipponbare</strain>
    </source>
</reference>
<reference key="7">
    <citation type="journal article" date="2013" name="Rice">
        <title>Improvement of the Oryza sativa Nipponbare reference genome using next generation sequence and optical map data.</title>
        <authorList>
            <person name="Kawahara Y."/>
            <person name="de la Bastide M."/>
            <person name="Hamilton J.P."/>
            <person name="Kanamori H."/>
            <person name="McCombie W.R."/>
            <person name="Ouyang S."/>
            <person name="Schwartz D.C."/>
            <person name="Tanaka T."/>
            <person name="Wu J."/>
            <person name="Zhou S."/>
            <person name="Childs K.L."/>
            <person name="Davidson R.M."/>
            <person name="Lin H."/>
            <person name="Quesada-Ocampo L."/>
            <person name="Vaillancourt B."/>
            <person name="Sakai H."/>
            <person name="Lee S.S."/>
            <person name="Kim J."/>
            <person name="Numa H."/>
            <person name="Itoh T."/>
            <person name="Buell C.R."/>
            <person name="Matsumoto T."/>
        </authorList>
    </citation>
    <scope>GENOME REANNOTATION</scope>
    <source>
        <strain>cv. Nipponbare</strain>
    </source>
</reference>
<reference key="8">
    <citation type="journal article" date="2005" name="PLoS Biol.">
        <title>The genomes of Oryza sativa: a history of duplications.</title>
        <authorList>
            <person name="Yu J."/>
            <person name="Wang J."/>
            <person name="Lin W."/>
            <person name="Li S."/>
            <person name="Li H."/>
            <person name="Zhou J."/>
            <person name="Ni P."/>
            <person name="Dong W."/>
            <person name="Hu S."/>
            <person name="Zeng C."/>
            <person name="Zhang J."/>
            <person name="Zhang Y."/>
            <person name="Li R."/>
            <person name="Xu Z."/>
            <person name="Li S."/>
            <person name="Li X."/>
            <person name="Zheng H."/>
            <person name="Cong L."/>
            <person name="Lin L."/>
            <person name="Yin J."/>
            <person name="Geng J."/>
            <person name="Li G."/>
            <person name="Shi J."/>
            <person name="Liu J."/>
            <person name="Lv H."/>
            <person name="Li J."/>
            <person name="Wang J."/>
            <person name="Deng Y."/>
            <person name="Ran L."/>
            <person name="Shi X."/>
            <person name="Wang X."/>
            <person name="Wu Q."/>
            <person name="Li C."/>
            <person name="Ren X."/>
            <person name="Wang J."/>
            <person name="Wang X."/>
            <person name="Li D."/>
            <person name="Liu D."/>
            <person name="Zhang X."/>
            <person name="Ji Z."/>
            <person name="Zhao W."/>
            <person name="Sun Y."/>
            <person name="Zhang Z."/>
            <person name="Bao J."/>
            <person name="Han Y."/>
            <person name="Dong L."/>
            <person name="Ji J."/>
            <person name="Chen P."/>
            <person name="Wu S."/>
            <person name="Liu J."/>
            <person name="Xiao Y."/>
            <person name="Bu D."/>
            <person name="Tan J."/>
            <person name="Yang L."/>
            <person name="Ye C."/>
            <person name="Zhang J."/>
            <person name="Xu J."/>
            <person name="Zhou Y."/>
            <person name="Yu Y."/>
            <person name="Zhang B."/>
            <person name="Zhuang S."/>
            <person name="Wei H."/>
            <person name="Liu B."/>
            <person name="Lei M."/>
            <person name="Yu H."/>
            <person name="Li Y."/>
            <person name="Xu H."/>
            <person name="Wei S."/>
            <person name="He X."/>
            <person name="Fang L."/>
            <person name="Zhang Z."/>
            <person name="Zhang Y."/>
            <person name="Huang X."/>
            <person name="Su Z."/>
            <person name="Tong W."/>
            <person name="Li J."/>
            <person name="Tong Z."/>
            <person name="Li S."/>
            <person name="Ye J."/>
            <person name="Wang L."/>
            <person name="Fang L."/>
            <person name="Lei T."/>
            <person name="Chen C.-S."/>
            <person name="Chen H.-C."/>
            <person name="Xu Z."/>
            <person name="Li H."/>
            <person name="Huang H."/>
            <person name="Zhang F."/>
            <person name="Xu H."/>
            <person name="Li N."/>
            <person name="Zhao C."/>
            <person name="Li S."/>
            <person name="Dong L."/>
            <person name="Huang Y."/>
            <person name="Li L."/>
            <person name="Xi Y."/>
            <person name="Qi Q."/>
            <person name="Li W."/>
            <person name="Zhang B."/>
            <person name="Hu W."/>
            <person name="Zhang Y."/>
            <person name="Tian X."/>
            <person name="Jiao Y."/>
            <person name="Liang X."/>
            <person name="Jin J."/>
            <person name="Gao L."/>
            <person name="Zheng W."/>
            <person name="Hao B."/>
            <person name="Liu S.-M."/>
            <person name="Wang W."/>
            <person name="Yuan L."/>
            <person name="Cao M."/>
            <person name="McDermott J."/>
            <person name="Samudrala R."/>
            <person name="Wang J."/>
            <person name="Wong G.K.-S."/>
            <person name="Yang H."/>
        </authorList>
    </citation>
    <scope>NUCLEOTIDE SEQUENCE [LARGE SCALE GENOMIC DNA]</scope>
    <source>
        <strain>cv. Nipponbare</strain>
    </source>
</reference>
<reference key="9">
    <citation type="journal article" date="2000" name="Mol. Breed.">
        <title>Production of transgenic rice plants showing reduced heading date and plant height by ectopic expression of rice MADS-box genes.</title>
        <authorList>
            <person name="Jeon J.-S."/>
            <person name="Lee S."/>
            <person name="Nam J."/>
            <person name="Jung K.-H."/>
            <person name="Yang W.-S."/>
            <person name="Yi G.-H."/>
            <person name="Oh B.-G."/>
            <person name="An G."/>
        </authorList>
        <dbReference type="AGRICOLA" id="IND22436162"/>
    </citation>
    <scope>FUNCTION</scope>
</reference>
<reference key="10">
    <citation type="journal article" date="2000" name="Plant Mol. Biol.">
        <title>Two rice MADS domain proteins interact with OsMADS1.</title>
        <authorList>
            <person name="Lim J."/>
            <person name="Moon Y.-H."/>
            <person name="An G."/>
            <person name="Jang S.K."/>
        </authorList>
    </citation>
    <scope>INTERACTION WITH MADS1</scope>
</reference>
<evidence type="ECO:0000255" key="1">
    <source>
        <dbReference type="PROSITE-ProRule" id="PRU00251"/>
    </source>
</evidence>
<evidence type="ECO:0000255" key="2">
    <source>
        <dbReference type="PROSITE-ProRule" id="PRU00629"/>
    </source>
</evidence>
<evidence type="ECO:0000256" key="3">
    <source>
        <dbReference type="SAM" id="MobiDB-lite"/>
    </source>
</evidence>
<evidence type="ECO:0000269" key="4">
    <source>
    </source>
</evidence>
<evidence type="ECO:0000269" key="5">
    <source ref="9"/>
</evidence>
<evidence type="ECO:0000303" key="6">
    <source ref="3"/>
</evidence>
<evidence type="ECO:0000305" key="7"/>
<evidence type="ECO:0000312" key="8">
    <source>
        <dbReference type="EMBL" id="EEE59943.1"/>
    </source>
</evidence>
<keyword id="KW-0025">Alternative splicing</keyword>
<keyword id="KW-0217">Developmental protein</keyword>
<keyword id="KW-0221">Differentiation</keyword>
<keyword id="KW-0238">DNA-binding</keyword>
<keyword id="KW-0287">Flowering</keyword>
<keyword id="KW-0539">Nucleus</keyword>
<keyword id="KW-1185">Reference proteome</keyword>
<keyword id="KW-0804">Transcription</keyword>
<keyword id="KW-0805">Transcription regulation</keyword>
<comment type="function">
    <text evidence="5">Probable transcription factor. May be involved in the control of flowering time.</text>
</comment>
<comment type="subunit">
    <text>May interact with the K-box of MADS1 and MADS6.</text>
</comment>
<comment type="interaction">
    <interactant intactId="EBI-627890">
        <id>Q10CQ1</id>
    </interactant>
    <interactant intactId="EBI-627957">
        <id>Q10PZ9</id>
        <label>MADS1</label>
    </interactant>
    <organismsDiffer>false</organismsDiffer>
    <experiments>4</experiments>
</comment>
<comment type="interaction">
    <interactant intactId="EBI-627890">
        <id>Q10CQ1</id>
    </interactant>
    <interactant intactId="EBI-627980">
        <id>Q6EU39</id>
        <label>MADS6</label>
    </interactant>
    <organismsDiffer>false</organismsDiffer>
    <experiments>5</experiments>
</comment>
<comment type="interaction">
    <interactant intactId="EBI-627890">
        <id>Q10CQ1</id>
    </interactant>
    <interactant intactId="EBI-627872">
        <id>Q0J466</id>
        <label>MADS7</label>
    </interactant>
    <organismsDiffer>false</organismsDiffer>
    <experiments>4</experiments>
</comment>
<comment type="subcellular location">
    <subcellularLocation>
        <location evidence="7">Nucleus</location>
    </subcellularLocation>
</comment>
<comment type="alternative products">
    <event type="alternative splicing"/>
    <isoform>
        <id>Q10CQ1-1</id>
        <id>Q7Y023-1</id>
        <name>1</name>
        <sequence type="displayed"/>
    </isoform>
    <isoform>
        <id>Q10CQ1-2</id>
        <id>Q7Y023-2</id>
        <name>2</name>
        <sequence type="described" ref="VSP_017783"/>
    </isoform>
</comment>
<comment type="tissue specificity">
    <text evidence="4">Highly expressed in sterile lemmas, at intermediate levels in stamens, and weakly in lemmas, paleas and carpels.</text>
</comment>
<comment type="developmental stage">
    <text>Expressed at early stage of flower development in the spikelet (rice flower) apical meristem and later in developing stamens, pistil primordia and differentiated anthers.</text>
</comment>
<sequence>MGRGKVQLKRIENKINRQVTFSKRRSGLLKKANEISVLCDAEVALIIFSTKGKLYEYATDSCMDKILERYERYSYAEKVLISAESDTQGNWCHEYRKLKAKVETIQKCQKHLMGEDLESLNLKELQQLEQQLENSLKHIRSRKSQLMLESINELQRKEKSLQEENKVLQKELVEKQKVQKQQVQWDQTQPQTSSSSSSFMMREALPTTNISNYPAAAGERIEDVAAGQPQHVRIGLPPWMLSHING</sequence>
<gene>
    <name type="primary">MADS14</name>
    <name type="synonym">AGL10</name>
    <name type="synonym">RAP1B</name>
    <name type="ordered locus">Os03g0752800</name>
    <name type="ordered locus">LOC_Os03g54160</name>
    <name type="ORF">OJ1112_G08.13</name>
    <name evidence="8" type="ORF">OsJ_12598</name>
    <name type="ORF">OSJNBa0032E21.04</name>
    <name type="ORF">OSJNBa0047E24.2</name>
</gene>